<proteinExistence type="uncertain"/>
<sequence length="183" mass="20581">MGSSFVIDRSSSSPAPPRGPAPKLSAHARKIICKISPNRSFLFIISLHICEKYFISMGLRGHRSRFSRSVSTFFSPGKLACIAHLRVGCQIVPIFPYGAFLKTPYNRCAGNKVSESTHRRAVVRPSTRYFVTTFQDTETQLIIVSSVEVKKRKGIVILSIEFQSMHLKQRVDHQVDFLGNKIL</sequence>
<evidence type="ECO:0000256" key="1">
    <source>
        <dbReference type="SAM" id="MobiDB-lite"/>
    </source>
</evidence>
<evidence type="ECO:0000305" key="2"/>
<evidence type="ECO:0000305" key="3">
    <source>
    </source>
</evidence>
<reference key="1">
    <citation type="journal article" date="1997" name="Nature">
        <title>The nucleotide sequence of Saccharomyces cerevisiae chromosome XII.</title>
        <authorList>
            <person name="Johnston M."/>
            <person name="Hillier L.W."/>
            <person name="Riles L."/>
            <person name="Albermann K."/>
            <person name="Andre B."/>
            <person name="Ansorge W."/>
            <person name="Benes V."/>
            <person name="Brueckner M."/>
            <person name="Delius H."/>
            <person name="Dubois E."/>
            <person name="Duesterhoeft A."/>
            <person name="Entian K.-D."/>
            <person name="Floeth M."/>
            <person name="Goffeau A."/>
            <person name="Hebling U."/>
            <person name="Heumann K."/>
            <person name="Heuss-Neitzel D."/>
            <person name="Hilbert H."/>
            <person name="Hilger F."/>
            <person name="Kleine K."/>
            <person name="Koetter P."/>
            <person name="Louis E.J."/>
            <person name="Messenguy F."/>
            <person name="Mewes H.-W."/>
            <person name="Miosga T."/>
            <person name="Moestl D."/>
            <person name="Mueller-Auer S."/>
            <person name="Nentwich U."/>
            <person name="Obermaier B."/>
            <person name="Piravandi E."/>
            <person name="Pohl T.M."/>
            <person name="Portetelle D."/>
            <person name="Purnelle B."/>
            <person name="Rechmann S."/>
            <person name="Rieger M."/>
            <person name="Rinke M."/>
            <person name="Rose M."/>
            <person name="Scharfe M."/>
            <person name="Scherens B."/>
            <person name="Scholler P."/>
            <person name="Schwager C."/>
            <person name="Schwarz S."/>
            <person name="Underwood A.P."/>
            <person name="Urrestarazu L.A."/>
            <person name="Vandenbol M."/>
            <person name="Verhasselt P."/>
            <person name="Vierendeels F."/>
            <person name="Voet M."/>
            <person name="Volckaert G."/>
            <person name="Voss H."/>
            <person name="Wambutt R."/>
            <person name="Wedler E."/>
            <person name="Wedler H."/>
            <person name="Zimmermann F.K."/>
            <person name="Zollner A."/>
            <person name="Hani J."/>
            <person name="Hoheisel J.D."/>
        </authorList>
    </citation>
    <scope>NUCLEOTIDE SEQUENCE [LARGE SCALE GENOMIC DNA]</scope>
    <source>
        <strain>ATCC 204508 / S288c</strain>
    </source>
</reference>
<reference key="2">
    <citation type="journal article" date="2014" name="G3 (Bethesda)">
        <title>The reference genome sequence of Saccharomyces cerevisiae: Then and now.</title>
        <authorList>
            <person name="Engel S.R."/>
            <person name="Dietrich F.S."/>
            <person name="Fisk D.G."/>
            <person name="Binkley G."/>
            <person name="Balakrishnan R."/>
            <person name="Costanzo M.C."/>
            <person name="Dwight S.S."/>
            <person name="Hitz B.C."/>
            <person name="Karra K."/>
            <person name="Nash R.S."/>
            <person name="Weng S."/>
            <person name="Wong E.D."/>
            <person name="Lloyd P."/>
            <person name="Skrzypek M.S."/>
            <person name="Miyasato S.R."/>
            <person name="Simison M."/>
            <person name="Cherry J.M."/>
        </authorList>
    </citation>
    <scope>GENOME REANNOTATION</scope>
    <source>
        <strain>ATCC 204508 / S288c</strain>
    </source>
</reference>
<comment type="miscellaneous">
    <text evidence="2">Partially overlaps YLR462W and YLR464W.</text>
</comment>
<comment type="caution">
    <text evidence="3">Product of a dubious gene prediction unlikely to encode a functional protein. Because of that it is not part of the S.cerevisiae S288c complete/reference proteome set.</text>
</comment>
<protein>
    <recommendedName>
        <fullName>Putative uncharacterized protein YLR463C</fullName>
    </recommendedName>
</protein>
<dbReference type="EMBL" id="U22383">
    <property type="protein sequence ID" value="AAB64727.1"/>
    <property type="molecule type" value="Genomic_DNA"/>
</dbReference>
<dbReference type="PIR" id="S70307">
    <property type="entry name" value="S70307"/>
</dbReference>
<dbReference type="IntAct" id="O13557">
    <property type="interactions" value="1"/>
</dbReference>
<dbReference type="STRING" id="4932.YLR463C"/>
<dbReference type="PaxDb" id="4932-YLR463C"/>
<dbReference type="EnsemblFungi" id="YLR463C_mRNA">
    <property type="protein sequence ID" value="YLR463C"/>
    <property type="gene ID" value="YLR463C"/>
</dbReference>
<dbReference type="AGR" id="SGD:S000004455"/>
<dbReference type="SGD" id="S000004455">
    <property type="gene designation" value="YLR463C"/>
</dbReference>
<dbReference type="GeneTree" id="ENSGT00940000180639"/>
<dbReference type="HOGENOM" id="CLU_1476263_0_0_1"/>
<gene>
    <name type="ordered locus">YLR463C</name>
    <name type="ORF">JND183</name>
    <name type="ORF">L9001</name>
</gene>
<organism>
    <name type="scientific">Saccharomyces cerevisiae (strain ATCC 204508 / S288c)</name>
    <name type="common">Baker's yeast</name>
    <dbReference type="NCBI Taxonomy" id="559292"/>
    <lineage>
        <taxon>Eukaryota</taxon>
        <taxon>Fungi</taxon>
        <taxon>Dikarya</taxon>
        <taxon>Ascomycota</taxon>
        <taxon>Saccharomycotina</taxon>
        <taxon>Saccharomycetes</taxon>
        <taxon>Saccharomycetales</taxon>
        <taxon>Saccharomycetaceae</taxon>
        <taxon>Saccharomyces</taxon>
    </lineage>
</organism>
<accession>O13557</accession>
<feature type="chain" id="PRO_0000299653" description="Putative uncharacterized protein YLR463C">
    <location>
        <begin position="1"/>
        <end position="183"/>
    </location>
</feature>
<feature type="region of interest" description="Disordered" evidence="1">
    <location>
        <begin position="1"/>
        <end position="23"/>
    </location>
</feature>
<name>YL463_YEAST</name>